<sequence>MATVSMRDMLKAGVHFGHQTRYWNPKMKPFIFGARNKVHIINLEKTVPMFNEALAELNKIASRKGKILFVGTKRAASEAVKDAALSCDQFFVNHRWLGGMLTNWKTVRQSIKRLKDLETQSQDGTFDKLTKKEALMRTRELEKLENSLGGIKDMGGLPDALFVIDADHEHIAIKEANNLGIPVFAIVDTNSDPDGVDFVIPGNDDAIRAVTLYLGAVAATVREGRSQDLASQAEESFVEAE</sequence>
<accession>B7UIL4</accession>
<reference key="1">
    <citation type="journal article" date="2009" name="J. Bacteriol.">
        <title>Complete genome sequence and comparative genome analysis of enteropathogenic Escherichia coli O127:H6 strain E2348/69.</title>
        <authorList>
            <person name="Iguchi A."/>
            <person name="Thomson N.R."/>
            <person name="Ogura Y."/>
            <person name="Saunders D."/>
            <person name="Ooka T."/>
            <person name="Henderson I.R."/>
            <person name="Harris D."/>
            <person name="Asadulghani M."/>
            <person name="Kurokawa K."/>
            <person name="Dean P."/>
            <person name="Kenny B."/>
            <person name="Quail M.A."/>
            <person name="Thurston S."/>
            <person name="Dougan G."/>
            <person name="Hayashi T."/>
            <person name="Parkhill J."/>
            <person name="Frankel G."/>
        </authorList>
    </citation>
    <scope>NUCLEOTIDE SEQUENCE [LARGE SCALE GENOMIC DNA]</scope>
    <source>
        <strain>E2348/69 / EPEC</strain>
    </source>
</reference>
<organism>
    <name type="scientific">Escherichia coli O127:H6 (strain E2348/69 / EPEC)</name>
    <dbReference type="NCBI Taxonomy" id="574521"/>
    <lineage>
        <taxon>Bacteria</taxon>
        <taxon>Pseudomonadati</taxon>
        <taxon>Pseudomonadota</taxon>
        <taxon>Gammaproteobacteria</taxon>
        <taxon>Enterobacterales</taxon>
        <taxon>Enterobacteriaceae</taxon>
        <taxon>Escherichia</taxon>
    </lineage>
</organism>
<protein>
    <recommendedName>
        <fullName evidence="1">Small ribosomal subunit protein uS2</fullName>
    </recommendedName>
    <alternativeName>
        <fullName evidence="2">30S ribosomal protein S2</fullName>
    </alternativeName>
</protein>
<gene>
    <name evidence="1" type="primary">rpsB</name>
    <name type="ordered locus">E2348C_0174</name>
</gene>
<proteinExistence type="inferred from homology"/>
<keyword id="KW-1185">Reference proteome</keyword>
<keyword id="KW-0687">Ribonucleoprotein</keyword>
<keyword id="KW-0689">Ribosomal protein</keyword>
<name>RS2_ECO27</name>
<dbReference type="EMBL" id="FM180568">
    <property type="protein sequence ID" value="CAS07722.1"/>
    <property type="molecule type" value="Genomic_DNA"/>
</dbReference>
<dbReference type="RefSeq" id="WP_000246882.1">
    <property type="nucleotide sequence ID" value="NC_011601.1"/>
</dbReference>
<dbReference type="EMDB" id="EMD-47168"/>
<dbReference type="EMDB" id="EMD-47169"/>
<dbReference type="SMR" id="B7UIL4"/>
<dbReference type="GeneID" id="89519558"/>
<dbReference type="KEGG" id="ecg:E2348C_0174"/>
<dbReference type="HOGENOM" id="CLU_040318_1_2_6"/>
<dbReference type="Proteomes" id="UP000008205">
    <property type="component" value="Chromosome"/>
</dbReference>
<dbReference type="GO" id="GO:0022627">
    <property type="term" value="C:cytosolic small ribosomal subunit"/>
    <property type="evidence" value="ECO:0007669"/>
    <property type="project" value="TreeGrafter"/>
</dbReference>
<dbReference type="GO" id="GO:0003735">
    <property type="term" value="F:structural constituent of ribosome"/>
    <property type="evidence" value="ECO:0007669"/>
    <property type="project" value="InterPro"/>
</dbReference>
<dbReference type="GO" id="GO:0006412">
    <property type="term" value="P:translation"/>
    <property type="evidence" value="ECO:0007669"/>
    <property type="project" value="UniProtKB-UniRule"/>
</dbReference>
<dbReference type="CDD" id="cd01425">
    <property type="entry name" value="RPS2"/>
    <property type="match status" value="1"/>
</dbReference>
<dbReference type="FunFam" id="1.10.287.610:FF:000001">
    <property type="entry name" value="30S ribosomal protein S2"/>
    <property type="match status" value="1"/>
</dbReference>
<dbReference type="Gene3D" id="3.40.50.10490">
    <property type="entry name" value="Glucose-6-phosphate isomerase like protein, domain 1"/>
    <property type="match status" value="1"/>
</dbReference>
<dbReference type="Gene3D" id="1.10.287.610">
    <property type="entry name" value="Helix hairpin bin"/>
    <property type="match status" value="1"/>
</dbReference>
<dbReference type="HAMAP" id="MF_00291_B">
    <property type="entry name" value="Ribosomal_uS2_B"/>
    <property type="match status" value="1"/>
</dbReference>
<dbReference type="InterPro" id="IPR001865">
    <property type="entry name" value="Ribosomal_uS2"/>
</dbReference>
<dbReference type="InterPro" id="IPR005706">
    <property type="entry name" value="Ribosomal_uS2_bac/mit/plastid"/>
</dbReference>
<dbReference type="InterPro" id="IPR018130">
    <property type="entry name" value="Ribosomal_uS2_CS"/>
</dbReference>
<dbReference type="InterPro" id="IPR023591">
    <property type="entry name" value="Ribosomal_uS2_flav_dom_sf"/>
</dbReference>
<dbReference type="NCBIfam" id="TIGR01011">
    <property type="entry name" value="rpsB_bact"/>
    <property type="match status" value="1"/>
</dbReference>
<dbReference type="PANTHER" id="PTHR12534">
    <property type="entry name" value="30S RIBOSOMAL PROTEIN S2 PROKARYOTIC AND ORGANELLAR"/>
    <property type="match status" value="1"/>
</dbReference>
<dbReference type="PANTHER" id="PTHR12534:SF0">
    <property type="entry name" value="SMALL RIBOSOMAL SUBUNIT PROTEIN US2M"/>
    <property type="match status" value="1"/>
</dbReference>
<dbReference type="Pfam" id="PF00318">
    <property type="entry name" value="Ribosomal_S2"/>
    <property type="match status" value="1"/>
</dbReference>
<dbReference type="PRINTS" id="PR00395">
    <property type="entry name" value="RIBOSOMALS2"/>
</dbReference>
<dbReference type="SUPFAM" id="SSF52313">
    <property type="entry name" value="Ribosomal protein S2"/>
    <property type="match status" value="1"/>
</dbReference>
<dbReference type="PROSITE" id="PS00962">
    <property type="entry name" value="RIBOSOMAL_S2_1"/>
    <property type="match status" value="1"/>
</dbReference>
<dbReference type="PROSITE" id="PS00963">
    <property type="entry name" value="RIBOSOMAL_S2_2"/>
    <property type="match status" value="1"/>
</dbReference>
<evidence type="ECO:0000255" key="1">
    <source>
        <dbReference type="HAMAP-Rule" id="MF_00291"/>
    </source>
</evidence>
<evidence type="ECO:0000305" key="2"/>
<comment type="similarity">
    <text evidence="1">Belongs to the universal ribosomal protein uS2 family.</text>
</comment>
<feature type="chain" id="PRO_1000132644" description="Small ribosomal subunit protein uS2">
    <location>
        <begin position="1"/>
        <end position="241"/>
    </location>
</feature>